<evidence type="ECO:0000250" key="1"/>
<evidence type="ECO:0000255" key="2">
    <source>
        <dbReference type="HAMAP-Rule" id="MF_00118"/>
    </source>
</evidence>
<gene>
    <name evidence="2" type="primary">tuf1</name>
    <name type="ordered locus">Plav_2722</name>
</gene>
<gene>
    <name evidence="2" type="primary">tuf2</name>
    <name type="ordered locus">Plav_2734</name>
</gene>
<comment type="function">
    <text evidence="2">GTP hydrolase that promotes the GTP-dependent binding of aminoacyl-tRNA to the A-site of ribosomes during protein biosynthesis.</text>
</comment>
<comment type="catalytic activity">
    <reaction evidence="2">
        <text>GTP + H2O = GDP + phosphate + H(+)</text>
        <dbReference type="Rhea" id="RHEA:19669"/>
        <dbReference type="ChEBI" id="CHEBI:15377"/>
        <dbReference type="ChEBI" id="CHEBI:15378"/>
        <dbReference type="ChEBI" id="CHEBI:37565"/>
        <dbReference type="ChEBI" id="CHEBI:43474"/>
        <dbReference type="ChEBI" id="CHEBI:58189"/>
        <dbReference type="EC" id="3.6.5.3"/>
    </reaction>
    <physiologicalReaction direction="left-to-right" evidence="2">
        <dbReference type="Rhea" id="RHEA:19670"/>
    </physiologicalReaction>
</comment>
<comment type="subunit">
    <text evidence="2">Monomer.</text>
</comment>
<comment type="subcellular location">
    <subcellularLocation>
        <location evidence="2">Cytoplasm</location>
    </subcellularLocation>
</comment>
<comment type="similarity">
    <text evidence="2">Belongs to the TRAFAC class translation factor GTPase superfamily. Classic translation factor GTPase family. EF-Tu/EF-1A subfamily.</text>
</comment>
<accession>A7HWP7</accession>
<proteinExistence type="inferred from homology"/>
<keyword id="KW-0963">Cytoplasm</keyword>
<keyword id="KW-0251">Elongation factor</keyword>
<keyword id="KW-0342">GTP-binding</keyword>
<keyword id="KW-0378">Hydrolase</keyword>
<keyword id="KW-0460">Magnesium</keyword>
<keyword id="KW-0479">Metal-binding</keyword>
<keyword id="KW-0547">Nucleotide-binding</keyword>
<keyword id="KW-0648">Protein biosynthesis</keyword>
<keyword id="KW-1185">Reference proteome</keyword>
<feature type="chain" id="PRO_0000337454" description="Elongation factor Tu">
    <location>
        <begin position="1"/>
        <end position="396"/>
    </location>
</feature>
<feature type="domain" description="tr-type G">
    <location>
        <begin position="10"/>
        <end position="206"/>
    </location>
</feature>
<feature type="region of interest" description="G1" evidence="1">
    <location>
        <begin position="19"/>
        <end position="26"/>
    </location>
</feature>
<feature type="region of interest" description="G2" evidence="1">
    <location>
        <begin position="60"/>
        <end position="64"/>
    </location>
</feature>
<feature type="region of interest" description="G3" evidence="1">
    <location>
        <begin position="81"/>
        <end position="84"/>
    </location>
</feature>
<feature type="region of interest" description="G4" evidence="1">
    <location>
        <begin position="136"/>
        <end position="139"/>
    </location>
</feature>
<feature type="region of interest" description="G5" evidence="1">
    <location>
        <begin position="174"/>
        <end position="176"/>
    </location>
</feature>
<feature type="binding site" evidence="2">
    <location>
        <begin position="19"/>
        <end position="26"/>
    </location>
    <ligand>
        <name>GTP</name>
        <dbReference type="ChEBI" id="CHEBI:37565"/>
    </ligand>
</feature>
<feature type="binding site" evidence="2">
    <location>
        <position position="26"/>
    </location>
    <ligand>
        <name>Mg(2+)</name>
        <dbReference type="ChEBI" id="CHEBI:18420"/>
    </ligand>
</feature>
<feature type="binding site" evidence="2">
    <location>
        <begin position="81"/>
        <end position="85"/>
    </location>
    <ligand>
        <name>GTP</name>
        <dbReference type="ChEBI" id="CHEBI:37565"/>
    </ligand>
</feature>
<feature type="binding site" evidence="2">
    <location>
        <begin position="136"/>
        <end position="139"/>
    </location>
    <ligand>
        <name>GTP</name>
        <dbReference type="ChEBI" id="CHEBI:37565"/>
    </ligand>
</feature>
<dbReference type="EC" id="3.6.5.3" evidence="2"/>
<dbReference type="EMBL" id="CP000774">
    <property type="protein sequence ID" value="ABS64330.1"/>
    <property type="molecule type" value="Genomic_DNA"/>
</dbReference>
<dbReference type="EMBL" id="CP000774">
    <property type="protein sequence ID" value="ABS64342.1"/>
    <property type="molecule type" value="Genomic_DNA"/>
</dbReference>
<dbReference type="RefSeq" id="WP_012111645.1">
    <property type="nucleotide sequence ID" value="NC_009719.1"/>
</dbReference>
<dbReference type="SMR" id="A7HWP7"/>
<dbReference type="STRING" id="402881.Plav_2722"/>
<dbReference type="KEGG" id="pla:Plav_2722"/>
<dbReference type="KEGG" id="pla:Plav_2734"/>
<dbReference type="eggNOG" id="COG0050">
    <property type="taxonomic scope" value="Bacteria"/>
</dbReference>
<dbReference type="HOGENOM" id="CLU_007265_0_0_5"/>
<dbReference type="OrthoDB" id="9803139at2"/>
<dbReference type="Proteomes" id="UP000006377">
    <property type="component" value="Chromosome"/>
</dbReference>
<dbReference type="GO" id="GO:0005829">
    <property type="term" value="C:cytosol"/>
    <property type="evidence" value="ECO:0007669"/>
    <property type="project" value="TreeGrafter"/>
</dbReference>
<dbReference type="GO" id="GO:0005525">
    <property type="term" value="F:GTP binding"/>
    <property type="evidence" value="ECO:0007669"/>
    <property type="project" value="UniProtKB-UniRule"/>
</dbReference>
<dbReference type="GO" id="GO:0003924">
    <property type="term" value="F:GTPase activity"/>
    <property type="evidence" value="ECO:0007669"/>
    <property type="project" value="InterPro"/>
</dbReference>
<dbReference type="GO" id="GO:0097216">
    <property type="term" value="F:guanosine tetraphosphate binding"/>
    <property type="evidence" value="ECO:0007669"/>
    <property type="project" value="UniProtKB-ARBA"/>
</dbReference>
<dbReference type="GO" id="GO:0003746">
    <property type="term" value="F:translation elongation factor activity"/>
    <property type="evidence" value="ECO:0007669"/>
    <property type="project" value="UniProtKB-UniRule"/>
</dbReference>
<dbReference type="CDD" id="cd01884">
    <property type="entry name" value="EF_Tu"/>
    <property type="match status" value="1"/>
</dbReference>
<dbReference type="CDD" id="cd03697">
    <property type="entry name" value="EFTU_II"/>
    <property type="match status" value="1"/>
</dbReference>
<dbReference type="CDD" id="cd03707">
    <property type="entry name" value="EFTU_III"/>
    <property type="match status" value="1"/>
</dbReference>
<dbReference type="FunFam" id="2.40.30.10:FF:000001">
    <property type="entry name" value="Elongation factor Tu"/>
    <property type="match status" value="1"/>
</dbReference>
<dbReference type="FunFam" id="3.40.50.300:FF:000003">
    <property type="entry name" value="Elongation factor Tu"/>
    <property type="match status" value="1"/>
</dbReference>
<dbReference type="Gene3D" id="3.40.50.300">
    <property type="entry name" value="P-loop containing nucleotide triphosphate hydrolases"/>
    <property type="match status" value="1"/>
</dbReference>
<dbReference type="Gene3D" id="2.40.30.10">
    <property type="entry name" value="Translation factors"/>
    <property type="match status" value="2"/>
</dbReference>
<dbReference type="HAMAP" id="MF_00118_B">
    <property type="entry name" value="EF_Tu_B"/>
    <property type="match status" value="1"/>
</dbReference>
<dbReference type="InterPro" id="IPR041709">
    <property type="entry name" value="EF-Tu_GTP-bd"/>
</dbReference>
<dbReference type="InterPro" id="IPR050055">
    <property type="entry name" value="EF-Tu_GTPase"/>
</dbReference>
<dbReference type="InterPro" id="IPR004161">
    <property type="entry name" value="EFTu-like_2"/>
</dbReference>
<dbReference type="InterPro" id="IPR033720">
    <property type="entry name" value="EFTU_2"/>
</dbReference>
<dbReference type="InterPro" id="IPR031157">
    <property type="entry name" value="G_TR_CS"/>
</dbReference>
<dbReference type="InterPro" id="IPR027417">
    <property type="entry name" value="P-loop_NTPase"/>
</dbReference>
<dbReference type="InterPro" id="IPR005225">
    <property type="entry name" value="Small_GTP-bd"/>
</dbReference>
<dbReference type="InterPro" id="IPR000795">
    <property type="entry name" value="T_Tr_GTP-bd_dom"/>
</dbReference>
<dbReference type="InterPro" id="IPR009000">
    <property type="entry name" value="Transl_B-barrel_sf"/>
</dbReference>
<dbReference type="InterPro" id="IPR009001">
    <property type="entry name" value="Transl_elong_EF1A/Init_IF2_C"/>
</dbReference>
<dbReference type="InterPro" id="IPR004541">
    <property type="entry name" value="Transl_elong_EFTu/EF1A_bac/org"/>
</dbReference>
<dbReference type="InterPro" id="IPR004160">
    <property type="entry name" value="Transl_elong_EFTu/EF1A_C"/>
</dbReference>
<dbReference type="NCBIfam" id="TIGR00485">
    <property type="entry name" value="EF-Tu"/>
    <property type="match status" value="1"/>
</dbReference>
<dbReference type="NCBIfam" id="NF000766">
    <property type="entry name" value="PRK00049.1"/>
    <property type="match status" value="1"/>
</dbReference>
<dbReference type="NCBIfam" id="NF009372">
    <property type="entry name" value="PRK12735.1"/>
    <property type="match status" value="1"/>
</dbReference>
<dbReference type="NCBIfam" id="NF009373">
    <property type="entry name" value="PRK12736.1"/>
    <property type="match status" value="1"/>
</dbReference>
<dbReference type="NCBIfam" id="TIGR00231">
    <property type="entry name" value="small_GTP"/>
    <property type="match status" value="1"/>
</dbReference>
<dbReference type="PANTHER" id="PTHR43721:SF22">
    <property type="entry name" value="ELONGATION FACTOR TU, MITOCHONDRIAL"/>
    <property type="match status" value="1"/>
</dbReference>
<dbReference type="PANTHER" id="PTHR43721">
    <property type="entry name" value="ELONGATION FACTOR TU-RELATED"/>
    <property type="match status" value="1"/>
</dbReference>
<dbReference type="Pfam" id="PF00009">
    <property type="entry name" value="GTP_EFTU"/>
    <property type="match status" value="1"/>
</dbReference>
<dbReference type="Pfam" id="PF03144">
    <property type="entry name" value="GTP_EFTU_D2"/>
    <property type="match status" value="1"/>
</dbReference>
<dbReference type="Pfam" id="PF03143">
    <property type="entry name" value="GTP_EFTU_D3"/>
    <property type="match status" value="1"/>
</dbReference>
<dbReference type="PRINTS" id="PR00315">
    <property type="entry name" value="ELONGATNFCT"/>
</dbReference>
<dbReference type="SUPFAM" id="SSF50465">
    <property type="entry name" value="EF-Tu/eEF-1alpha/eIF2-gamma C-terminal domain"/>
    <property type="match status" value="1"/>
</dbReference>
<dbReference type="SUPFAM" id="SSF52540">
    <property type="entry name" value="P-loop containing nucleoside triphosphate hydrolases"/>
    <property type="match status" value="1"/>
</dbReference>
<dbReference type="SUPFAM" id="SSF50447">
    <property type="entry name" value="Translation proteins"/>
    <property type="match status" value="1"/>
</dbReference>
<dbReference type="PROSITE" id="PS00301">
    <property type="entry name" value="G_TR_1"/>
    <property type="match status" value="1"/>
</dbReference>
<dbReference type="PROSITE" id="PS51722">
    <property type="entry name" value="G_TR_2"/>
    <property type="match status" value="1"/>
</dbReference>
<sequence>MAKEKFERNKPHCNIGTIGHVDHGKTSLTAAITKVLAETGGATYSAYDQIDKAPEEKARGITISTAHVEYQTEARHYAHVDCPGHADYVKNMITGAAQMDGAILVVSAADGPMPQTREHILLARQVGVPALVVFMNKVDQVDDPELLELVEMEIRELLSSYDFPGDDIPIVKGSALAALEDSNKEIGHDAILELMKAVDAYIPQPERPKNLPFLMPIEDVFSISGRGTVVTGRIERGVVKVGEEIEIVGIKPTVKTTCTGVEMFRKLLDQGEAGDNVGVLLRGTKREDVERGQVLCAPGSITPHTEFEAEAYILTKEEGGRHTPFFTNYRPQFYFRTTDVTGVVTLPEGTEMVMPGDNVKMNVTLIAPIAMEEKLRFAIREGGRTVGAGVVSKVLK</sequence>
<reference key="1">
    <citation type="journal article" date="2011" name="Stand. Genomic Sci.">
        <title>Complete genome sequence of Parvibaculum lavamentivorans type strain (DS-1(T)).</title>
        <authorList>
            <person name="Schleheck D."/>
            <person name="Weiss M."/>
            <person name="Pitluck S."/>
            <person name="Bruce D."/>
            <person name="Land M.L."/>
            <person name="Han S."/>
            <person name="Saunders E."/>
            <person name="Tapia R."/>
            <person name="Detter C."/>
            <person name="Brettin T."/>
            <person name="Han J."/>
            <person name="Woyke T."/>
            <person name="Goodwin L."/>
            <person name="Pennacchio L."/>
            <person name="Nolan M."/>
            <person name="Cook A.M."/>
            <person name="Kjelleberg S."/>
            <person name="Thomas T."/>
        </authorList>
    </citation>
    <scope>NUCLEOTIDE SEQUENCE [LARGE SCALE GENOMIC DNA]</scope>
    <source>
        <strain>DS-1 / DSM 13023 / NCIMB 13966</strain>
    </source>
</reference>
<protein>
    <recommendedName>
        <fullName evidence="2">Elongation factor Tu</fullName>
        <shortName evidence="2">EF-Tu</shortName>
        <ecNumber evidence="2">3.6.5.3</ecNumber>
    </recommendedName>
</protein>
<name>EFTU_PARL1</name>
<organism>
    <name type="scientific">Parvibaculum lavamentivorans (strain DS-1 / DSM 13023 / NCIMB 13966)</name>
    <dbReference type="NCBI Taxonomy" id="402881"/>
    <lineage>
        <taxon>Bacteria</taxon>
        <taxon>Pseudomonadati</taxon>
        <taxon>Pseudomonadota</taxon>
        <taxon>Alphaproteobacteria</taxon>
        <taxon>Hyphomicrobiales</taxon>
        <taxon>Parvibaculaceae</taxon>
        <taxon>Parvibaculum</taxon>
    </lineage>
</organism>